<gene>
    <name evidence="1" type="primary">recR</name>
    <name type="ordered locus">BH0036</name>
</gene>
<protein>
    <recommendedName>
        <fullName evidence="1">Recombination protein RecR</fullName>
    </recommendedName>
</protein>
<organism>
    <name type="scientific">Halalkalibacterium halodurans (strain ATCC BAA-125 / DSM 18197 / FERM 7344 / JCM 9153 / C-125)</name>
    <name type="common">Bacillus halodurans</name>
    <dbReference type="NCBI Taxonomy" id="272558"/>
    <lineage>
        <taxon>Bacteria</taxon>
        <taxon>Bacillati</taxon>
        <taxon>Bacillota</taxon>
        <taxon>Bacilli</taxon>
        <taxon>Bacillales</taxon>
        <taxon>Bacillaceae</taxon>
        <taxon>Halalkalibacterium (ex Joshi et al. 2022)</taxon>
    </lineage>
</organism>
<sequence>MQYPEPIAKLIEGFMRLPGIGPKTASRLAFFVLEMKEDDVLDFAKALVNVKRKLTYCSVCHNITDTDPCRICEDSKRDESVICVVQDAKDVIAMEKMKEYHGKYHVLHGAISPMDGIGPEDIKIPELIKRLQDDTIQEVIVATNPTIEGEATAMYISRLVKPTGIKVTRIAHGLPVGGDLEYADEVTLSKAMEGRREL</sequence>
<evidence type="ECO:0000255" key="1">
    <source>
        <dbReference type="HAMAP-Rule" id="MF_00017"/>
    </source>
</evidence>
<name>RECR_HALH5</name>
<accession>Q9KGM3</accession>
<feature type="chain" id="PRO_0000190279" description="Recombination protein RecR">
    <location>
        <begin position="1"/>
        <end position="198"/>
    </location>
</feature>
<feature type="domain" description="Toprim" evidence="1">
    <location>
        <begin position="80"/>
        <end position="175"/>
    </location>
</feature>
<feature type="zinc finger region" description="C4-type" evidence="1">
    <location>
        <begin position="57"/>
        <end position="72"/>
    </location>
</feature>
<comment type="function">
    <text evidence="1">May play a role in DNA repair. It seems to be involved in an RecBC-independent recombinational process of DNA repair. It may act with RecF and RecO.</text>
</comment>
<comment type="similarity">
    <text evidence="1">Belongs to the RecR family.</text>
</comment>
<dbReference type="EMBL" id="BA000004">
    <property type="protein sequence ID" value="BAB03755.1"/>
    <property type="molecule type" value="Genomic_DNA"/>
</dbReference>
<dbReference type="PIR" id="D83654">
    <property type="entry name" value="D83654"/>
</dbReference>
<dbReference type="RefSeq" id="WP_010896220.1">
    <property type="nucleotide sequence ID" value="NC_002570.2"/>
</dbReference>
<dbReference type="SMR" id="Q9KGM3"/>
<dbReference type="STRING" id="272558.gene:10725855"/>
<dbReference type="GeneID" id="87595556"/>
<dbReference type="KEGG" id="bha:BH00036"/>
<dbReference type="eggNOG" id="COG0353">
    <property type="taxonomic scope" value="Bacteria"/>
</dbReference>
<dbReference type="HOGENOM" id="CLU_060739_1_0_9"/>
<dbReference type="OrthoDB" id="9802672at2"/>
<dbReference type="Proteomes" id="UP000001258">
    <property type="component" value="Chromosome"/>
</dbReference>
<dbReference type="GO" id="GO:0003677">
    <property type="term" value="F:DNA binding"/>
    <property type="evidence" value="ECO:0007669"/>
    <property type="project" value="UniProtKB-UniRule"/>
</dbReference>
<dbReference type="GO" id="GO:0008270">
    <property type="term" value="F:zinc ion binding"/>
    <property type="evidence" value="ECO:0007669"/>
    <property type="project" value="UniProtKB-KW"/>
</dbReference>
<dbReference type="GO" id="GO:0006310">
    <property type="term" value="P:DNA recombination"/>
    <property type="evidence" value="ECO:0007669"/>
    <property type="project" value="UniProtKB-UniRule"/>
</dbReference>
<dbReference type="GO" id="GO:0006281">
    <property type="term" value="P:DNA repair"/>
    <property type="evidence" value="ECO:0007669"/>
    <property type="project" value="UniProtKB-UniRule"/>
</dbReference>
<dbReference type="CDD" id="cd01025">
    <property type="entry name" value="TOPRIM_recR"/>
    <property type="match status" value="1"/>
</dbReference>
<dbReference type="Gene3D" id="3.30.60.80">
    <property type="match status" value="1"/>
</dbReference>
<dbReference type="Gene3D" id="3.40.1360.10">
    <property type="match status" value="1"/>
</dbReference>
<dbReference type="Gene3D" id="6.10.250.240">
    <property type="match status" value="1"/>
</dbReference>
<dbReference type="Gene3D" id="1.10.8.420">
    <property type="entry name" value="RecR Domain 1"/>
    <property type="match status" value="1"/>
</dbReference>
<dbReference type="HAMAP" id="MF_00017">
    <property type="entry name" value="RecR"/>
    <property type="match status" value="1"/>
</dbReference>
<dbReference type="InterPro" id="IPR000093">
    <property type="entry name" value="DNA_Rcmb_RecR"/>
</dbReference>
<dbReference type="InterPro" id="IPR023627">
    <property type="entry name" value="Rcmb_RecR"/>
</dbReference>
<dbReference type="InterPro" id="IPR015967">
    <property type="entry name" value="Rcmb_RecR_Znf"/>
</dbReference>
<dbReference type="InterPro" id="IPR006171">
    <property type="entry name" value="TOPRIM_dom"/>
</dbReference>
<dbReference type="InterPro" id="IPR034137">
    <property type="entry name" value="TOPRIM_RecR"/>
</dbReference>
<dbReference type="NCBIfam" id="TIGR00615">
    <property type="entry name" value="recR"/>
    <property type="match status" value="1"/>
</dbReference>
<dbReference type="PANTHER" id="PTHR30446">
    <property type="entry name" value="RECOMBINATION PROTEIN RECR"/>
    <property type="match status" value="1"/>
</dbReference>
<dbReference type="PANTHER" id="PTHR30446:SF0">
    <property type="entry name" value="RECOMBINATION PROTEIN RECR"/>
    <property type="match status" value="1"/>
</dbReference>
<dbReference type="Pfam" id="PF21175">
    <property type="entry name" value="RecR_C"/>
    <property type="match status" value="1"/>
</dbReference>
<dbReference type="Pfam" id="PF21176">
    <property type="entry name" value="RecR_HhH"/>
    <property type="match status" value="1"/>
</dbReference>
<dbReference type="Pfam" id="PF02132">
    <property type="entry name" value="RecR_ZnF"/>
    <property type="match status" value="1"/>
</dbReference>
<dbReference type="Pfam" id="PF13662">
    <property type="entry name" value="Toprim_4"/>
    <property type="match status" value="1"/>
</dbReference>
<dbReference type="SMART" id="SM00493">
    <property type="entry name" value="TOPRIM"/>
    <property type="match status" value="1"/>
</dbReference>
<dbReference type="SUPFAM" id="SSF111304">
    <property type="entry name" value="Recombination protein RecR"/>
    <property type="match status" value="1"/>
</dbReference>
<dbReference type="PROSITE" id="PS01300">
    <property type="entry name" value="RECR"/>
    <property type="match status" value="1"/>
</dbReference>
<dbReference type="PROSITE" id="PS50880">
    <property type="entry name" value="TOPRIM"/>
    <property type="match status" value="1"/>
</dbReference>
<reference key="1">
    <citation type="journal article" date="2000" name="Nucleic Acids Res.">
        <title>Complete genome sequence of the alkaliphilic bacterium Bacillus halodurans and genomic sequence comparison with Bacillus subtilis.</title>
        <authorList>
            <person name="Takami H."/>
            <person name="Nakasone K."/>
            <person name="Takaki Y."/>
            <person name="Maeno G."/>
            <person name="Sasaki R."/>
            <person name="Masui N."/>
            <person name="Fuji F."/>
            <person name="Hirama C."/>
            <person name="Nakamura Y."/>
            <person name="Ogasawara N."/>
            <person name="Kuhara S."/>
            <person name="Horikoshi K."/>
        </authorList>
    </citation>
    <scope>NUCLEOTIDE SEQUENCE [LARGE SCALE GENOMIC DNA]</scope>
    <source>
        <strain>ATCC BAA-125 / DSM 18197 / FERM 7344 / JCM 9153 / C-125</strain>
    </source>
</reference>
<proteinExistence type="inferred from homology"/>
<keyword id="KW-0227">DNA damage</keyword>
<keyword id="KW-0233">DNA recombination</keyword>
<keyword id="KW-0234">DNA repair</keyword>
<keyword id="KW-0479">Metal-binding</keyword>
<keyword id="KW-1185">Reference proteome</keyword>
<keyword id="KW-0862">Zinc</keyword>
<keyword id="KW-0863">Zinc-finger</keyword>